<protein>
    <recommendedName>
        <fullName evidence="1">1-deoxy-D-xylulose-5-phosphate synthase</fullName>
        <ecNumber evidence="1">2.2.1.7</ecNumber>
    </recommendedName>
    <alternativeName>
        <fullName evidence="1">1-deoxyxylulose-5-phosphate synthase</fullName>
        <shortName evidence="1">DXP synthase</shortName>
        <shortName evidence="1">DXPS</shortName>
    </alternativeName>
</protein>
<comment type="function">
    <text evidence="1">Catalyzes the acyloin condensation reaction between C atoms 2 and 3 of pyruvate and glyceraldehyde 3-phosphate to yield 1-deoxy-D-xylulose-5-phosphate (DXP).</text>
</comment>
<comment type="catalytic activity">
    <reaction evidence="1">
        <text>D-glyceraldehyde 3-phosphate + pyruvate + H(+) = 1-deoxy-D-xylulose 5-phosphate + CO2</text>
        <dbReference type="Rhea" id="RHEA:12605"/>
        <dbReference type="ChEBI" id="CHEBI:15361"/>
        <dbReference type="ChEBI" id="CHEBI:15378"/>
        <dbReference type="ChEBI" id="CHEBI:16526"/>
        <dbReference type="ChEBI" id="CHEBI:57792"/>
        <dbReference type="ChEBI" id="CHEBI:59776"/>
        <dbReference type="EC" id="2.2.1.7"/>
    </reaction>
</comment>
<comment type="cofactor">
    <cofactor evidence="1">
        <name>Mg(2+)</name>
        <dbReference type="ChEBI" id="CHEBI:18420"/>
    </cofactor>
    <text evidence="1">Binds 1 Mg(2+) ion per subunit.</text>
</comment>
<comment type="cofactor">
    <cofactor evidence="1">
        <name>thiamine diphosphate</name>
        <dbReference type="ChEBI" id="CHEBI:58937"/>
    </cofactor>
    <text evidence="1">Binds 1 thiamine pyrophosphate per subunit.</text>
</comment>
<comment type="pathway">
    <text evidence="1">Metabolic intermediate biosynthesis; 1-deoxy-D-xylulose 5-phosphate biosynthesis; 1-deoxy-D-xylulose 5-phosphate from D-glyceraldehyde 3-phosphate and pyruvate: step 1/1.</text>
</comment>
<comment type="subunit">
    <text evidence="1">Homodimer.</text>
</comment>
<comment type="similarity">
    <text evidence="1">Belongs to the transketolase family. DXPS subfamily.</text>
</comment>
<proteinExistence type="inferred from homology"/>
<accession>B8E247</accession>
<evidence type="ECO:0000255" key="1">
    <source>
        <dbReference type="HAMAP-Rule" id="MF_00315"/>
    </source>
</evidence>
<sequence length="618" mass="68297">MLLQKIESPKDLKKLSIEELKKLSSEIREIIINTVENNGGHLASNLGTVELTLALHYVFDAPKDKIIWDVGHQAYTHKLITGRAKDFHTLRQYGGISGYIAPWESEYDHFAVGHAGTSLSAALGFAKARDLKGEKYKVVAVIGDGALTSGMALEALNQIGYLNTDLIVILNDNEHSISPNVGAMALYLAKLRKHPLYRFFKQTTQNLLKNSSIGKGLLAFDLKLERSLKSLLLENPMFEYLGFKYFGPFDGHDIPLLISVFKGIKDNLSCPVLIHVTTKKGIGHKDAEATPSKFHSIGSKSEKEKKVPTYTEVFGKALVELGGMYPEVVAITAAMPEGTGLSYFAQRFPERFFDVGIAEQHAVTFAAGLAKNGLKPVVAIYSTFLQRSFDQIIHDVCLQKLPITFVLDRAGIVSDDGPTHQGIFDLSYLRLIPNMVIAAPKDESELRDLLYTAINYPGPFAIRYPKGKGVGVELKNRFEKIEIGKSEIVKQGRDVLILAIGSMVYPAVEAGNILRSEGIYPTVVNVRFLKPLDILTLEELILSHNTIITVEENVITGGLFGAIAELINILKINKKVIPIGLPDKFIEQGNVQLLRDIYGLNEYKIAEKIISVLEDIKV</sequence>
<dbReference type="EC" id="2.2.1.7" evidence="1"/>
<dbReference type="EMBL" id="CP001251">
    <property type="protein sequence ID" value="ACK42324.1"/>
    <property type="molecule type" value="Genomic_DNA"/>
</dbReference>
<dbReference type="RefSeq" id="WP_012583407.1">
    <property type="nucleotide sequence ID" value="NC_011661.1"/>
</dbReference>
<dbReference type="RefSeq" id="YP_002352938.1">
    <property type="nucleotide sequence ID" value="NC_011661.1"/>
</dbReference>
<dbReference type="SMR" id="B8E247"/>
<dbReference type="FunCoup" id="B8E247">
    <property type="interactions" value="324"/>
</dbReference>
<dbReference type="STRING" id="515635.Dtur_1044"/>
<dbReference type="EnsemblBacteria" id="ACK42324">
    <property type="protein sequence ID" value="ACK42324"/>
    <property type="gene ID" value="Dtur_1044"/>
</dbReference>
<dbReference type="KEGG" id="dtu:Dtur_1044"/>
<dbReference type="PATRIC" id="fig|515635.4.peg.1081"/>
<dbReference type="eggNOG" id="COG1154">
    <property type="taxonomic scope" value="Bacteria"/>
</dbReference>
<dbReference type="HOGENOM" id="CLU_009227_1_4_0"/>
<dbReference type="InParanoid" id="B8E247"/>
<dbReference type="OrthoDB" id="9803371at2"/>
<dbReference type="UniPathway" id="UPA00064">
    <property type="reaction ID" value="UER00091"/>
</dbReference>
<dbReference type="Proteomes" id="UP000007719">
    <property type="component" value="Chromosome"/>
</dbReference>
<dbReference type="GO" id="GO:0005829">
    <property type="term" value="C:cytosol"/>
    <property type="evidence" value="ECO:0000318"/>
    <property type="project" value="GO_Central"/>
</dbReference>
<dbReference type="GO" id="GO:0008661">
    <property type="term" value="F:1-deoxy-D-xylulose-5-phosphate synthase activity"/>
    <property type="evidence" value="ECO:0000318"/>
    <property type="project" value="GO_Central"/>
</dbReference>
<dbReference type="GO" id="GO:0000287">
    <property type="term" value="F:magnesium ion binding"/>
    <property type="evidence" value="ECO:0007669"/>
    <property type="project" value="UniProtKB-UniRule"/>
</dbReference>
<dbReference type="GO" id="GO:0030976">
    <property type="term" value="F:thiamine pyrophosphate binding"/>
    <property type="evidence" value="ECO:0007669"/>
    <property type="project" value="UniProtKB-UniRule"/>
</dbReference>
<dbReference type="GO" id="GO:0052865">
    <property type="term" value="P:1-deoxy-D-xylulose 5-phosphate biosynthetic process"/>
    <property type="evidence" value="ECO:0007669"/>
    <property type="project" value="UniProtKB-UniPathway"/>
</dbReference>
<dbReference type="GO" id="GO:0019288">
    <property type="term" value="P:isopentenyl diphosphate biosynthetic process, methylerythritol 4-phosphate pathway"/>
    <property type="evidence" value="ECO:0000318"/>
    <property type="project" value="GO_Central"/>
</dbReference>
<dbReference type="GO" id="GO:0016114">
    <property type="term" value="P:terpenoid biosynthetic process"/>
    <property type="evidence" value="ECO:0007669"/>
    <property type="project" value="UniProtKB-UniRule"/>
</dbReference>
<dbReference type="GO" id="GO:0009228">
    <property type="term" value="P:thiamine biosynthetic process"/>
    <property type="evidence" value="ECO:0007669"/>
    <property type="project" value="UniProtKB-UniRule"/>
</dbReference>
<dbReference type="CDD" id="cd02007">
    <property type="entry name" value="TPP_DXS"/>
    <property type="match status" value="1"/>
</dbReference>
<dbReference type="CDD" id="cd07033">
    <property type="entry name" value="TPP_PYR_DXS_TK_like"/>
    <property type="match status" value="1"/>
</dbReference>
<dbReference type="FunFam" id="3.40.50.920:FF:000002">
    <property type="entry name" value="1-deoxy-D-xylulose-5-phosphate synthase"/>
    <property type="match status" value="1"/>
</dbReference>
<dbReference type="FunFam" id="3.40.50.970:FF:000005">
    <property type="entry name" value="1-deoxy-D-xylulose-5-phosphate synthase"/>
    <property type="match status" value="1"/>
</dbReference>
<dbReference type="Gene3D" id="3.40.50.920">
    <property type="match status" value="1"/>
</dbReference>
<dbReference type="Gene3D" id="3.40.50.970">
    <property type="match status" value="2"/>
</dbReference>
<dbReference type="HAMAP" id="MF_00315">
    <property type="entry name" value="DXP_synth"/>
    <property type="match status" value="1"/>
</dbReference>
<dbReference type="InterPro" id="IPR005477">
    <property type="entry name" value="Dxylulose-5-P_synthase"/>
</dbReference>
<dbReference type="InterPro" id="IPR029061">
    <property type="entry name" value="THDP-binding"/>
</dbReference>
<dbReference type="InterPro" id="IPR009014">
    <property type="entry name" value="Transketo_C/PFOR_II"/>
</dbReference>
<dbReference type="InterPro" id="IPR005475">
    <property type="entry name" value="Transketolase-like_Pyr-bd"/>
</dbReference>
<dbReference type="InterPro" id="IPR033248">
    <property type="entry name" value="Transketolase_C"/>
</dbReference>
<dbReference type="InterPro" id="IPR049557">
    <property type="entry name" value="Transketolase_CS"/>
</dbReference>
<dbReference type="NCBIfam" id="TIGR00204">
    <property type="entry name" value="dxs"/>
    <property type="match status" value="1"/>
</dbReference>
<dbReference type="NCBIfam" id="NF003933">
    <property type="entry name" value="PRK05444.2-2"/>
    <property type="match status" value="1"/>
</dbReference>
<dbReference type="PANTHER" id="PTHR43322">
    <property type="entry name" value="1-D-DEOXYXYLULOSE 5-PHOSPHATE SYNTHASE-RELATED"/>
    <property type="match status" value="1"/>
</dbReference>
<dbReference type="PANTHER" id="PTHR43322:SF5">
    <property type="entry name" value="1-DEOXY-D-XYLULOSE-5-PHOSPHATE SYNTHASE, CHLOROPLASTIC"/>
    <property type="match status" value="1"/>
</dbReference>
<dbReference type="Pfam" id="PF13292">
    <property type="entry name" value="DXP_synthase_N"/>
    <property type="match status" value="1"/>
</dbReference>
<dbReference type="Pfam" id="PF02779">
    <property type="entry name" value="Transket_pyr"/>
    <property type="match status" value="1"/>
</dbReference>
<dbReference type="Pfam" id="PF02780">
    <property type="entry name" value="Transketolase_C"/>
    <property type="match status" value="1"/>
</dbReference>
<dbReference type="SMART" id="SM00861">
    <property type="entry name" value="Transket_pyr"/>
    <property type="match status" value="1"/>
</dbReference>
<dbReference type="SUPFAM" id="SSF52518">
    <property type="entry name" value="Thiamin diphosphate-binding fold (THDP-binding)"/>
    <property type="match status" value="2"/>
</dbReference>
<dbReference type="SUPFAM" id="SSF52922">
    <property type="entry name" value="TK C-terminal domain-like"/>
    <property type="match status" value="1"/>
</dbReference>
<dbReference type="PROSITE" id="PS00801">
    <property type="entry name" value="TRANSKETOLASE_1"/>
    <property type="match status" value="1"/>
</dbReference>
<gene>
    <name evidence="1" type="primary">dxs</name>
    <name type="ordered locus">Dtur_1044</name>
</gene>
<organism>
    <name type="scientific">Dictyoglomus turgidum (strain DSM 6724 / Z-1310)</name>
    <dbReference type="NCBI Taxonomy" id="515635"/>
    <lineage>
        <taxon>Bacteria</taxon>
        <taxon>Pseudomonadati</taxon>
        <taxon>Dictyoglomota</taxon>
        <taxon>Dictyoglomia</taxon>
        <taxon>Dictyoglomales</taxon>
        <taxon>Dictyoglomaceae</taxon>
        <taxon>Dictyoglomus</taxon>
    </lineage>
</organism>
<feature type="chain" id="PRO_1000119544" description="1-deoxy-D-xylulose-5-phosphate synthase">
    <location>
        <begin position="1"/>
        <end position="618"/>
    </location>
</feature>
<feature type="binding site" evidence="1">
    <location>
        <position position="72"/>
    </location>
    <ligand>
        <name>thiamine diphosphate</name>
        <dbReference type="ChEBI" id="CHEBI:58937"/>
    </ligand>
</feature>
<feature type="binding site" evidence="1">
    <location>
        <begin position="113"/>
        <end position="115"/>
    </location>
    <ligand>
        <name>thiamine diphosphate</name>
        <dbReference type="ChEBI" id="CHEBI:58937"/>
    </ligand>
</feature>
<feature type="binding site" evidence="1">
    <location>
        <position position="144"/>
    </location>
    <ligand>
        <name>Mg(2+)</name>
        <dbReference type="ChEBI" id="CHEBI:18420"/>
    </ligand>
</feature>
<feature type="binding site" evidence="1">
    <location>
        <begin position="145"/>
        <end position="146"/>
    </location>
    <ligand>
        <name>thiamine diphosphate</name>
        <dbReference type="ChEBI" id="CHEBI:58937"/>
    </ligand>
</feature>
<feature type="binding site" evidence="1">
    <location>
        <position position="173"/>
    </location>
    <ligand>
        <name>Mg(2+)</name>
        <dbReference type="ChEBI" id="CHEBI:18420"/>
    </ligand>
</feature>
<feature type="binding site" evidence="1">
    <location>
        <position position="173"/>
    </location>
    <ligand>
        <name>thiamine diphosphate</name>
        <dbReference type="ChEBI" id="CHEBI:58937"/>
    </ligand>
</feature>
<feature type="binding site" evidence="1">
    <location>
        <position position="284"/>
    </location>
    <ligand>
        <name>thiamine diphosphate</name>
        <dbReference type="ChEBI" id="CHEBI:58937"/>
    </ligand>
</feature>
<feature type="binding site" evidence="1">
    <location>
        <position position="359"/>
    </location>
    <ligand>
        <name>thiamine diphosphate</name>
        <dbReference type="ChEBI" id="CHEBI:58937"/>
    </ligand>
</feature>
<keyword id="KW-0414">Isoprene biosynthesis</keyword>
<keyword id="KW-0460">Magnesium</keyword>
<keyword id="KW-0479">Metal-binding</keyword>
<keyword id="KW-1185">Reference proteome</keyword>
<keyword id="KW-0784">Thiamine biosynthesis</keyword>
<keyword id="KW-0786">Thiamine pyrophosphate</keyword>
<keyword id="KW-0808">Transferase</keyword>
<name>DXS_DICTD</name>
<reference key="1">
    <citation type="journal article" date="2016" name="Front. Microbiol.">
        <title>The complete genome sequence of hyperthermophile Dictyoglomus turgidum DSM 6724 reveals a specialized carbohydrate fermentor.</title>
        <authorList>
            <person name="Brumm P.J."/>
            <person name="Gowda K."/>
            <person name="Robb F.T."/>
            <person name="Mead D.A."/>
        </authorList>
    </citation>
    <scope>NUCLEOTIDE SEQUENCE [LARGE SCALE GENOMIC DNA]</scope>
    <source>
        <strain>DSM 6724 / Z-1310</strain>
    </source>
</reference>